<evidence type="ECO:0000250" key="1">
    <source>
        <dbReference type="UniProtKB" id="P03901"/>
    </source>
</evidence>
<evidence type="ECO:0000250" key="2">
    <source>
        <dbReference type="UniProtKB" id="P03902"/>
    </source>
</evidence>
<evidence type="ECO:0000255" key="3"/>
<evidence type="ECO:0000305" key="4"/>
<sequence>MMPINLNLIMAFSLALIGALVYRSHLMSTLLCLEGMMLSLFIQMALLISHFHMFSMSMAPLILLVFSACEAGLGLALLVKTSSNYGNDYVQNLNLLQC</sequence>
<geneLocation type="mitochondrion"/>
<keyword id="KW-0249">Electron transport</keyword>
<keyword id="KW-0472">Membrane</keyword>
<keyword id="KW-0496">Mitochondrion</keyword>
<keyword id="KW-0999">Mitochondrion inner membrane</keyword>
<keyword id="KW-0520">NAD</keyword>
<keyword id="KW-0679">Respiratory chain</keyword>
<keyword id="KW-1278">Translocase</keyword>
<keyword id="KW-0812">Transmembrane</keyword>
<keyword id="KW-1133">Transmembrane helix</keyword>
<keyword id="KW-0813">Transport</keyword>
<keyword id="KW-0830">Ubiquinone</keyword>
<feature type="chain" id="PRO_0000275007" description="NADH-ubiquinone oxidoreductase chain 4L">
    <location>
        <begin position="1"/>
        <end position="98"/>
    </location>
</feature>
<feature type="transmembrane region" description="Helical" evidence="3">
    <location>
        <begin position="1"/>
        <end position="21"/>
    </location>
</feature>
<feature type="transmembrane region" description="Helical" evidence="3">
    <location>
        <begin position="28"/>
        <end position="48"/>
    </location>
</feature>
<feature type="transmembrane region" description="Helical" evidence="3">
    <location>
        <begin position="59"/>
        <end position="79"/>
    </location>
</feature>
<accession>Q1MWK4</accession>
<name>NU4LM_DISPE</name>
<gene>
    <name type="primary">MT-ND4L</name>
    <name type="synonym">MTND4L</name>
    <name type="synonym">NADH4L</name>
    <name type="synonym">ND4L</name>
</gene>
<reference key="1">
    <citation type="journal article" date="2006" name="Genes Genet. Syst.">
        <title>Phylogenetic analysis of diprotodontian marsupials based on complete mitochondrial genomes.</title>
        <authorList>
            <person name="Munemasa M."/>
            <person name="Nikaido M."/>
            <person name="Donnellan S."/>
            <person name="Austin C.C."/>
            <person name="Okada N."/>
            <person name="Hasegawa M."/>
        </authorList>
    </citation>
    <scope>NUCLEOTIDE SEQUENCE [GENOMIC DNA]</scope>
    <source>
        <tissue>Liver</tissue>
    </source>
</reference>
<protein>
    <recommendedName>
        <fullName>NADH-ubiquinone oxidoreductase chain 4L</fullName>
        <ecNumber>7.1.1.2</ecNumber>
    </recommendedName>
    <alternativeName>
        <fullName>NADH dehydrogenase subunit 4L</fullName>
    </alternativeName>
</protein>
<organism>
    <name type="scientific">Distoechurus pennatus</name>
    <name type="common">Feather-tailed possum</name>
    <dbReference type="NCBI Taxonomy" id="38614"/>
    <lineage>
        <taxon>Eukaryota</taxon>
        <taxon>Metazoa</taxon>
        <taxon>Chordata</taxon>
        <taxon>Craniata</taxon>
        <taxon>Vertebrata</taxon>
        <taxon>Euteleostomi</taxon>
        <taxon>Mammalia</taxon>
        <taxon>Metatheria</taxon>
        <taxon>Diprotodontia</taxon>
        <taxon>Acrobatidae</taxon>
        <taxon>Distoechurus</taxon>
    </lineage>
</organism>
<proteinExistence type="inferred from homology"/>
<dbReference type="EC" id="7.1.1.2"/>
<dbReference type="EMBL" id="AB241052">
    <property type="protein sequence ID" value="BAE93962.1"/>
    <property type="molecule type" value="Genomic_DNA"/>
</dbReference>
<dbReference type="RefSeq" id="YP_637174.1">
    <property type="nucleotide sequence ID" value="NC_008145.1"/>
</dbReference>
<dbReference type="SMR" id="Q1MWK4"/>
<dbReference type="GeneID" id="4108278"/>
<dbReference type="CTD" id="4539"/>
<dbReference type="GO" id="GO:0005743">
    <property type="term" value="C:mitochondrial inner membrane"/>
    <property type="evidence" value="ECO:0000250"/>
    <property type="project" value="UniProtKB"/>
</dbReference>
<dbReference type="GO" id="GO:0045271">
    <property type="term" value="C:respiratory chain complex I"/>
    <property type="evidence" value="ECO:0000250"/>
    <property type="project" value="UniProtKB"/>
</dbReference>
<dbReference type="GO" id="GO:0008137">
    <property type="term" value="F:NADH dehydrogenase (ubiquinone) activity"/>
    <property type="evidence" value="ECO:0000250"/>
    <property type="project" value="UniProtKB"/>
</dbReference>
<dbReference type="GO" id="GO:0042773">
    <property type="term" value="P:ATP synthesis coupled electron transport"/>
    <property type="evidence" value="ECO:0007669"/>
    <property type="project" value="InterPro"/>
</dbReference>
<dbReference type="FunFam" id="1.10.287.3510:FF:000002">
    <property type="entry name" value="NADH-ubiquinone oxidoreductase chain 4L"/>
    <property type="match status" value="1"/>
</dbReference>
<dbReference type="Gene3D" id="1.10.287.3510">
    <property type="match status" value="1"/>
</dbReference>
<dbReference type="InterPro" id="IPR001133">
    <property type="entry name" value="NADH_UbQ_OxRdtase_chain4L/K"/>
</dbReference>
<dbReference type="InterPro" id="IPR039428">
    <property type="entry name" value="NUOK/Mnh_C1-like"/>
</dbReference>
<dbReference type="PANTHER" id="PTHR11434:SF0">
    <property type="entry name" value="NADH-UBIQUINONE OXIDOREDUCTASE CHAIN 4L"/>
    <property type="match status" value="1"/>
</dbReference>
<dbReference type="PANTHER" id="PTHR11434">
    <property type="entry name" value="NADH-UBIQUINONE OXIDOREDUCTASE SUBUNIT ND4L"/>
    <property type="match status" value="1"/>
</dbReference>
<dbReference type="Pfam" id="PF00420">
    <property type="entry name" value="Oxidored_q2"/>
    <property type="match status" value="1"/>
</dbReference>
<comment type="function">
    <text evidence="1">Core subunit of the mitochondrial membrane respiratory chain NADH dehydrogenase (Complex I) which catalyzes electron transfer from NADH through the respiratory chain, using ubiquinone as an electron acceptor. Part of the enzyme membrane arm which is embedded in the lipid bilayer and involved in proton translocation.</text>
</comment>
<comment type="catalytic activity">
    <reaction evidence="1">
        <text>a ubiquinone + NADH + 5 H(+)(in) = a ubiquinol + NAD(+) + 4 H(+)(out)</text>
        <dbReference type="Rhea" id="RHEA:29091"/>
        <dbReference type="Rhea" id="RHEA-COMP:9565"/>
        <dbReference type="Rhea" id="RHEA-COMP:9566"/>
        <dbReference type="ChEBI" id="CHEBI:15378"/>
        <dbReference type="ChEBI" id="CHEBI:16389"/>
        <dbReference type="ChEBI" id="CHEBI:17976"/>
        <dbReference type="ChEBI" id="CHEBI:57540"/>
        <dbReference type="ChEBI" id="CHEBI:57945"/>
        <dbReference type="EC" id="7.1.1.2"/>
    </reaction>
    <physiologicalReaction direction="left-to-right" evidence="1">
        <dbReference type="Rhea" id="RHEA:29092"/>
    </physiologicalReaction>
</comment>
<comment type="subunit">
    <text evidence="2">Core subunit of respiratory chain NADH dehydrogenase (Complex I) which is composed of 45 different subunits.</text>
</comment>
<comment type="subcellular location">
    <subcellularLocation>
        <location evidence="2">Mitochondrion inner membrane</location>
        <topology evidence="3">Multi-pass membrane protein</topology>
    </subcellularLocation>
</comment>
<comment type="similarity">
    <text evidence="4">Belongs to the complex I subunit 4L family.</text>
</comment>